<protein>
    <recommendedName>
        <fullName evidence="1">Phosphate import ATP-binding protein PstB</fullName>
        <ecNumber evidence="1">7.3.2.1</ecNumber>
    </recommendedName>
    <alternativeName>
        <fullName evidence="1">ABC phosphate transporter</fullName>
    </alternativeName>
    <alternativeName>
        <fullName evidence="1">Phosphate-transporting ATPase</fullName>
    </alternativeName>
</protein>
<reference key="1">
    <citation type="journal article" date="2002" name="Nucleic Acids Res.">
        <title>The complete genomic sequence of Mycoplasma penetrans, an intracellular bacterial pathogen in humans.</title>
        <authorList>
            <person name="Sasaki Y."/>
            <person name="Ishikawa J."/>
            <person name="Yamashita A."/>
            <person name="Oshima K."/>
            <person name="Kenri T."/>
            <person name="Furuya K."/>
            <person name="Yoshino C."/>
            <person name="Horino A."/>
            <person name="Shiba T."/>
            <person name="Sasaki T."/>
            <person name="Hattori M."/>
        </authorList>
    </citation>
    <scope>NUCLEOTIDE SEQUENCE [LARGE SCALE GENOMIC DNA]</scope>
    <source>
        <strain>HF-2</strain>
    </source>
</reference>
<dbReference type="EC" id="7.3.2.1" evidence="1"/>
<dbReference type="EMBL" id="BA000026">
    <property type="protein sequence ID" value="BAC44722.1"/>
    <property type="molecule type" value="Genomic_DNA"/>
</dbReference>
<dbReference type="SMR" id="Q8EUJ1"/>
<dbReference type="FunCoup" id="Q8EUJ1">
    <property type="interactions" value="91"/>
</dbReference>
<dbReference type="STRING" id="272633.gene:10732056"/>
<dbReference type="KEGG" id="mpe:MYPE9350"/>
<dbReference type="eggNOG" id="COG1117">
    <property type="taxonomic scope" value="Bacteria"/>
</dbReference>
<dbReference type="HOGENOM" id="CLU_000604_1_22_14"/>
<dbReference type="InParanoid" id="Q8EUJ1"/>
<dbReference type="Proteomes" id="UP000002522">
    <property type="component" value="Chromosome"/>
</dbReference>
<dbReference type="GO" id="GO:0005886">
    <property type="term" value="C:plasma membrane"/>
    <property type="evidence" value="ECO:0007669"/>
    <property type="project" value="UniProtKB-SubCell"/>
</dbReference>
<dbReference type="GO" id="GO:0005524">
    <property type="term" value="F:ATP binding"/>
    <property type="evidence" value="ECO:0007669"/>
    <property type="project" value="UniProtKB-KW"/>
</dbReference>
<dbReference type="GO" id="GO:0016887">
    <property type="term" value="F:ATP hydrolysis activity"/>
    <property type="evidence" value="ECO:0007669"/>
    <property type="project" value="InterPro"/>
</dbReference>
<dbReference type="GO" id="GO:0015415">
    <property type="term" value="F:ATPase-coupled phosphate ion transmembrane transporter activity"/>
    <property type="evidence" value="ECO:0007669"/>
    <property type="project" value="UniProtKB-EC"/>
</dbReference>
<dbReference type="GO" id="GO:0035435">
    <property type="term" value="P:phosphate ion transmembrane transport"/>
    <property type="evidence" value="ECO:0007669"/>
    <property type="project" value="InterPro"/>
</dbReference>
<dbReference type="CDD" id="cd03260">
    <property type="entry name" value="ABC_PstB_phosphate_transporter"/>
    <property type="match status" value="1"/>
</dbReference>
<dbReference type="Gene3D" id="3.40.50.300">
    <property type="entry name" value="P-loop containing nucleotide triphosphate hydrolases"/>
    <property type="match status" value="1"/>
</dbReference>
<dbReference type="InterPro" id="IPR003593">
    <property type="entry name" value="AAA+_ATPase"/>
</dbReference>
<dbReference type="InterPro" id="IPR003439">
    <property type="entry name" value="ABC_transporter-like_ATP-bd"/>
</dbReference>
<dbReference type="InterPro" id="IPR017871">
    <property type="entry name" value="ABC_transporter-like_CS"/>
</dbReference>
<dbReference type="InterPro" id="IPR027417">
    <property type="entry name" value="P-loop_NTPase"/>
</dbReference>
<dbReference type="InterPro" id="IPR005670">
    <property type="entry name" value="PstB-like"/>
</dbReference>
<dbReference type="NCBIfam" id="TIGR00972">
    <property type="entry name" value="3a0107s01c2"/>
    <property type="match status" value="1"/>
</dbReference>
<dbReference type="PANTHER" id="PTHR43423">
    <property type="entry name" value="ABC TRANSPORTER I FAMILY MEMBER 17"/>
    <property type="match status" value="1"/>
</dbReference>
<dbReference type="PANTHER" id="PTHR43423:SF1">
    <property type="entry name" value="ABC TRANSPORTER I FAMILY MEMBER 17"/>
    <property type="match status" value="1"/>
</dbReference>
<dbReference type="Pfam" id="PF00005">
    <property type="entry name" value="ABC_tran"/>
    <property type="match status" value="1"/>
</dbReference>
<dbReference type="SMART" id="SM00382">
    <property type="entry name" value="AAA"/>
    <property type="match status" value="1"/>
</dbReference>
<dbReference type="SUPFAM" id="SSF52540">
    <property type="entry name" value="P-loop containing nucleoside triphosphate hydrolases"/>
    <property type="match status" value="1"/>
</dbReference>
<dbReference type="PROSITE" id="PS00211">
    <property type="entry name" value="ABC_TRANSPORTER_1"/>
    <property type="match status" value="1"/>
</dbReference>
<dbReference type="PROSITE" id="PS50893">
    <property type="entry name" value="ABC_TRANSPORTER_2"/>
    <property type="match status" value="1"/>
</dbReference>
<dbReference type="PROSITE" id="PS51238">
    <property type="entry name" value="PSTB"/>
    <property type="match status" value="1"/>
</dbReference>
<keyword id="KW-0067">ATP-binding</keyword>
<keyword id="KW-1003">Cell membrane</keyword>
<keyword id="KW-0472">Membrane</keyword>
<keyword id="KW-0547">Nucleotide-binding</keyword>
<keyword id="KW-0592">Phosphate transport</keyword>
<keyword id="KW-1185">Reference proteome</keyword>
<keyword id="KW-1278">Translocase</keyword>
<keyword id="KW-0813">Transport</keyword>
<accession>Q8EUJ1</accession>
<evidence type="ECO:0000255" key="1">
    <source>
        <dbReference type="HAMAP-Rule" id="MF_01702"/>
    </source>
</evidence>
<organism>
    <name type="scientific">Malacoplasma penetrans (strain HF-2)</name>
    <name type="common">Mycoplasma penetrans</name>
    <dbReference type="NCBI Taxonomy" id="272633"/>
    <lineage>
        <taxon>Bacteria</taxon>
        <taxon>Bacillati</taxon>
        <taxon>Mycoplasmatota</taxon>
        <taxon>Mycoplasmoidales</taxon>
        <taxon>Mycoplasmoidaceae</taxon>
        <taxon>Malacoplasma</taxon>
    </lineage>
</organism>
<name>PSTB_MALP2</name>
<proteinExistence type="inferred from homology"/>
<sequence length="288" mass="32918">MIKDIKNKFSKLMSSVTKTSSDLKTKRNDFKEDFDDSNIFEIRDLNFYYENGKKQALYDVNLDIKKNKVTSFIGPSGCGKSTFLRLLNRMNELLPNTTFDGDIYFEKQNIYSKKFSVLDLRIKVGMVFQKATPFPMSIYDNVAFALKNQGIKNKKILDETIEKSLRSAALWDEVKDNLNDIATDLSGGQQQRLCIARAIACKPSVLLMDEPTSALDPIATSKIEELIMELKEKYTIIIVTHSMAQAQRISDETVFFFQGKIIENGPTKNIFLKPKEKKTRDYINGRIG</sequence>
<gene>
    <name evidence="1" type="primary">pstB</name>
    <name type="ordered locus">MYPE9350</name>
</gene>
<feature type="chain" id="PRO_0000092846" description="Phosphate import ATP-binding protein PstB">
    <location>
        <begin position="1"/>
        <end position="288"/>
    </location>
</feature>
<feature type="domain" description="ABC transporter" evidence="1">
    <location>
        <begin position="42"/>
        <end position="283"/>
    </location>
</feature>
<feature type="binding site" evidence="1">
    <location>
        <begin position="74"/>
        <end position="81"/>
    </location>
    <ligand>
        <name>ATP</name>
        <dbReference type="ChEBI" id="CHEBI:30616"/>
    </ligand>
</feature>
<comment type="function">
    <text evidence="1">Part of the ABC transporter complex PstSACB involved in phosphate import. Responsible for energy coupling to the transport system.</text>
</comment>
<comment type="catalytic activity">
    <reaction evidence="1">
        <text>phosphate(out) + ATP + H2O = ADP + 2 phosphate(in) + H(+)</text>
        <dbReference type="Rhea" id="RHEA:24440"/>
        <dbReference type="ChEBI" id="CHEBI:15377"/>
        <dbReference type="ChEBI" id="CHEBI:15378"/>
        <dbReference type="ChEBI" id="CHEBI:30616"/>
        <dbReference type="ChEBI" id="CHEBI:43474"/>
        <dbReference type="ChEBI" id="CHEBI:456216"/>
        <dbReference type="EC" id="7.3.2.1"/>
    </reaction>
</comment>
<comment type="subunit">
    <text evidence="1">The complex is composed of two ATP-binding proteins (PstB), two transmembrane proteins (PstC and PstA) and a solute-binding protein (PstS).</text>
</comment>
<comment type="subcellular location">
    <subcellularLocation>
        <location evidence="1">Cell membrane</location>
        <topology evidence="1">Peripheral membrane protein</topology>
    </subcellularLocation>
</comment>
<comment type="similarity">
    <text evidence="1">Belongs to the ABC transporter superfamily. Phosphate importer (TC 3.A.1.7) family.</text>
</comment>